<sequence>MKPTTIASLQKCKQDKKRFATITAYDYSFAKLFAEEGLNVMLVGDSLGMTVQGHDSTLPVTVADIAYHTAAVRRGAPNCLLLADLPFMAYATPEQAFENAATVMRAGANMVKIEGGEWLVETVQMLTERAVPVCGHLGLTPQSVNIFGGYKVQGRGDEAGDRLLSDALALEAAGAQLLVLECVPVELAKRITEALAIPVIGIGAGNVTDGQILVMHDAFGITGGHIPKFAKNFLAETGDIRAAVRQYMAEVESGVYPGEEHSFH</sequence>
<keyword id="KW-0963">Cytoplasm</keyword>
<keyword id="KW-0460">Magnesium</keyword>
<keyword id="KW-0479">Metal-binding</keyword>
<keyword id="KW-0566">Pantothenate biosynthesis</keyword>
<keyword id="KW-1185">Reference proteome</keyword>
<keyword id="KW-0808">Transferase</keyword>
<name>PANB_ECO45</name>
<dbReference type="EC" id="2.1.2.11" evidence="1"/>
<dbReference type="EMBL" id="CU928161">
    <property type="protein sequence ID" value="CAR01509.1"/>
    <property type="molecule type" value="Genomic_DNA"/>
</dbReference>
<dbReference type="RefSeq" id="WP_000805462.1">
    <property type="nucleotide sequence ID" value="NC_011742.1"/>
</dbReference>
<dbReference type="SMR" id="B7MBB7"/>
<dbReference type="KEGG" id="ecz:ECS88_0144"/>
<dbReference type="HOGENOM" id="CLU_036645_1_0_6"/>
<dbReference type="UniPathway" id="UPA00028">
    <property type="reaction ID" value="UER00003"/>
</dbReference>
<dbReference type="Proteomes" id="UP000000747">
    <property type="component" value="Chromosome"/>
</dbReference>
<dbReference type="GO" id="GO:0005737">
    <property type="term" value="C:cytoplasm"/>
    <property type="evidence" value="ECO:0007669"/>
    <property type="project" value="UniProtKB-SubCell"/>
</dbReference>
<dbReference type="GO" id="GO:0003864">
    <property type="term" value="F:3-methyl-2-oxobutanoate hydroxymethyltransferase activity"/>
    <property type="evidence" value="ECO:0007669"/>
    <property type="project" value="UniProtKB-UniRule"/>
</dbReference>
<dbReference type="GO" id="GO:0000287">
    <property type="term" value="F:magnesium ion binding"/>
    <property type="evidence" value="ECO:0007669"/>
    <property type="project" value="TreeGrafter"/>
</dbReference>
<dbReference type="GO" id="GO:0015940">
    <property type="term" value="P:pantothenate biosynthetic process"/>
    <property type="evidence" value="ECO:0007669"/>
    <property type="project" value="UniProtKB-UniRule"/>
</dbReference>
<dbReference type="CDD" id="cd06557">
    <property type="entry name" value="KPHMT-like"/>
    <property type="match status" value="1"/>
</dbReference>
<dbReference type="FunFam" id="3.20.20.60:FF:000003">
    <property type="entry name" value="3-methyl-2-oxobutanoate hydroxymethyltransferase"/>
    <property type="match status" value="1"/>
</dbReference>
<dbReference type="Gene3D" id="3.20.20.60">
    <property type="entry name" value="Phosphoenolpyruvate-binding domains"/>
    <property type="match status" value="1"/>
</dbReference>
<dbReference type="HAMAP" id="MF_00156">
    <property type="entry name" value="PanB"/>
    <property type="match status" value="1"/>
</dbReference>
<dbReference type="InterPro" id="IPR003700">
    <property type="entry name" value="Pantoate_hydroxy_MeTrfase"/>
</dbReference>
<dbReference type="InterPro" id="IPR015813">
    <property type="entry name" value="Pyrv/PenolPyrv_kinase-like_dom"/>
</dbReference>
<dbReference type="InterPro" id="IPR040442">
    <property type="entry name" value="Pyrv_kinase-like_dom_sf"/>
</dbReference>
<dbReference type="NCBIfam" id="TIGR00222">
    <property type="entry name" value="panB"/>
    <property type="match status" value="1"/>
</dbReference>
<dbReference type="NCBIfam" id="NF001452">
    <property type="entry name" value="PRK00311.1"/>
    <property type="match status" value="1"/>
</dbReference>
<dbReference type="PANTHER" id="PTHR20881">
    <property type="entry name" value="3-METHYL-2-OXOBUTANOATE HYDROXYMETHYLTRANSFERASE"/>
    <property type="match status" value="1"/>
</dbReference>
<dbReference type="PANTHER" id="PTHR20881:SF0">
    <property type="entry name" value="3-METHYL-2-OXOBUTANOATE HYDROXYMETHYLTRANSFERASE"/>
    <property type="match status" value="1"/>
</dbReference>
<dbReference type="Pfam" id="PF02548">
    <property type="entry name" value="Pantoate_transf"/>
    <property type="match status" value="1"/>
</dbReference>
<dbReference type="PIRSF" id="PIRSF000388">
    <property type="entry name" value="Pantoate_hydroxy_MeTrfase"/>
    <property type="match status" value="1"/>
</dbReference>
<dbReference type="SUPFAM" id="SSF51621">
    <property type="entry name" value="Phosphoenolpyruvate/pyruvate domain"/>
    <property type="match status" value="1"/>
</dbReference>
<evidence type="ECO:0000255" key="1">
    <source>
        <dbReference type="HAMAP-Rule" id="MF_00156"/>
    </source>
</evidence>
<gene>
    <name evidence="1" type="primary">panB</name>
    <name type="ordered locus">ECS88_0144</name>
</gene>
<proteinExistence type="inferred from homology"/>
<organism>
    <name type="scientific">Escherichia coli O45:K1 (strain S88 / ExPEC)</name>
    <dbReference type="NCBI Taxonomy" id="585035"/>
    <lineage>
        <taxon>Bacteria</taxon>
        <taxon>Pseudomonadati</taxon>
        <taxon>Pseudomonadota</taxon>
        <taxon>Gammaproteobacteria</taxon>
        <taxon>Enterobacterales</taxon>
        <taxon>Enterobacteriaceae</taxon>
        <taxon>Escherichia</taxon>
    </lineage>
</organism>
<protein>
    <recommendedName>
        <fullName evidence="1">3-methyl-2-oxobutanoate hydroxymethyltransferase</fullName>
        <ecNumber evidence="1">2.1.2.11</ecNumber>
    </recommendedName>
    <alternativeName>
        <fullName evidence="1">Ketopantoate hydroxymethyltransferase</fullName>
        <shortName evidence="1">KPHMT</shortName>
    </alternativeName>
</protein>
<accession>B7MBB7</accession>
<reference key="1">
    <citation type="journal article" date="2009" name="PLoS Genet.">
        <title>Organised genome dynamics in the Escherichia coli species results in highly diverse adaptive paths.</title>
        <authorList>
            <person name="Touchon M."/>
            <person name="Hoede C."/>
            <person name="Tenaillon O."/>
            <person name="Barbe V."/>
            <person name="Baeriswyl S."/>
            <person name="Bidet P."/>
            <person name="Bingen E."/>
            <person name="Bonacorsi S."/>
            <person name="Bouchier C."/>
            <person name="Bouvet O."/>
            <person name="Calteau A."/>
            <person name="Chiapello H."/>
            <person name="Clermont O."/>
            <person name="Cruveiller S."/>
            <person name="Danchin A."/>
            <person name="Diard M."/>
            <person name="Dossat C."/>
            <person name="Karoui M.E."/>
            <person name="Frapy E."/>
            <person name="Garry L."/>
            <person name="Ghigo J.M."/>
            <person name="Gilles A.M."/>
            <person name="Johnson J."/>
            <person name="Le Bouguenec C."/>
            <person name="Lescat M."/>
            <person name="Mangenot S."/>
            <person name="Martinez-Jehanne V."/>
            <person name="Matic I."/>
            <person name="Nassif X."/>
            <person name="Oztas S."/>
            <person name="Petit M.A."/>
            <person name="Pichon C."/>
            <person name="Rouy Z."/>
            <person name="Ruf C.S."/>
            <person name="Schneider D."/>
            <person name="Tourret J."/>
            <person name="Vacherie B."/>
            <person name="Vallenet D."/>
            <person name="Medigue C."/>
            <person name="Rocha E.P.C."/>
            <person name="Denamur E."/>
        </authorList>
    </citation>
    <scope>NUCLEOTIDE SEQUENCE [LARGE SCALE GENOMIC DNA]</scope>
    <source>
        <strain>S88 / ExPEC</strain>
    </source>
</reference>
<comment type="function">
    <text evidence="1">Catalyzes the reversible reaction in which hydroxymethyl group from 5,10-methylenetetrahydrofolate is transferred onto alpha-ketoisovalerate to form ketopantoate.</text>
</comment>
<comment type="catalytic activity">
    <reaction evidence="1">
        <text>3-methyl-2-oxobutanoate + (6R)-5,10-methylene-5,6,7,8-tetrahydrofolate + H2O = 2-dehydropantoate + (6S)-5,6,7,8-tetrahydrofolate</text>
        <dbReference type="Rhea" id="RHEA:11824"/>
        <dbReference type="ChEBI" id="CHEBI:11561"/>
        <dbReference type="ChEBI" id="CHEBI:11851"/>
        <dbReference type="ChEBI" id="CHEBI:15377"/>
        <dbReference type="ChEBI" id="CHEBI:15636"/>
        <dbReference type="ChEBI" id="CHEBI:57453"/>
        <dbReference type="EC" id="2.1.2.11"/>
    </reaction>
</comment>
<comment type="cofactor">
    <cofactor evidence="1">
        <name>Mg(2+)</name>
        <dbReference type="ChEBI" id="CHEBI:18420"/>
    </cofactor>
    <text evidence="1">Binds 1 Mg(2+) ion per subunit.</text>
</comment>
<comment type="pathway">
    <text evidence="1">Cofactor biosynthesis; (R)-pantothenate biosynthesis; (R)-pantoate from 3-methyl-2-oxobutanoate: step 1/2.</text>
</comment>
<comment type="subunit">
    <text evidence="1">Homodecamer; pentamer of dimers.</text>
</comment>
<comment type="subcellular location">
    <subcellularLocation>
        <location evidence="1">Cytoplasm</location>
    </subcellularLocation>
</comment>
<comment type="similarity">
    <text evidence="1">Belongs to the PanB family.</text>
</comment>
<feature type="chain" id="PRO_1000118122" description="3-methyl-2-oxobutanoate hydroxymethyltransferase">
    <location>
        <begin position="1"/>
        <end position="264"/>
    </location>
</feature>
<feature type="active site" description="Proton acceptor" evidence="1">
    <location>
        <position position="181"/>
    </location>
</feature>
<feature type="binding site" evidence="1">
    <location>
        <begin position="45"/>
        <end position="46"/>
    </location>
    <ligand>
        <name>3-methyl-2-oxobutanoate</name>
        <dbReference type="ChEBI" id="CHEBI:11851"/>
    </ligand>
</feature>
<feature type="binding site" evidence="1">
    <location>
        <position position="45"/>
    </location>
    <ligand>
        <name>Mg(2+)</name>
        <dbReference type="ChEBI" id="CHEBI:18420"/>
    </ligand>
</feature>
<feature type="binding site" evidence="1">
    <location>
        <position position="84"/>
    </location>
    <ligand>
        <name>3-methyl-2-oxobutanoate</name>
        <dbReference type="ChEBI" id="CHEBI:11851"/>
    </ligand>
</feature>
<feature type="binding site" evidence="1">
    <location>
        <position position="84"/>
    </location>
    <ligand>
        <name>Mg(2+)</name>
        <dbReference type="ChEBI" id="CHEBI:18420"/>
    </ligand>
</feature>
<feature type="binding site" evidence="1">
    <location>
        <position position="112"/>
    </location>
    <ligand>
        <name>3-methyl-2-oxobutanoate</name>
        <dbReference type="ChEBI" id="CHEBI:11851"/>
    </ligand>
</feature>
<feature type="binding site" evidence="1">
    <location>
        <position position="114"/>
    </location>
    <ligand>
        <name>Mg(2+)</name>
        <dbReference type="ChEBI" id="CHEBI:18420"/>
    </ligand>
</feature>